<sequence length="134" mass="15360">MIYMLDTNICVYAINKHPDSYYNNLELLAKNNTIAISSIVLAELQYGVSKSKKKEQNQSKLDIFLSRLEIIDFSAKCTFYYGELRTELEQKGLIIGNNDLLIASHAIAENATLVTNNIKEFKRIPNLILENWDK</sequence>
<feature type="chain" id="PRO_0000432237" description="Ribonuclease VapC2">
    <location>
        <begin position="1"/>
        <end position="134"/>
    </location>
</feature>
<feature type="domain" description="PINc" evidence="1">
    <location>
        <begin position="3"/>
        <end position="124"/>
    </location>
</feature>
<feature type="binding site" evidence="1">
    <location>
        <position position="6"/>
    </location>
    <ligand>
        <name>Mg(2+)</name>
        <dbReference type="ChEBI" id="CHEBI:18420"/>
    </ligand>
</feature>
<feature type="mutagenesis site" description="Probably inactivates toxin." evidence="4">
    <original>D</original>
    <variation>G</variation>
    <location>
        <position position="6"/>
    </location>
</feature>
<feature type="strand" evidence="6">
    <location>
        <begin position="2"/>
        <end position="5"/>
    </location>
</feature>
<feature type="helix" evidence="6">
    <location>
        <begin position="7"/>
        <end position="16"/>
    </location>
</feature>
<feature type="helix" evidence="6">
    <location>
        <begin position="19"/>
        <end position="29"/>
    </location>
</feature>
<feature type="strand" evidence="6">
    <location>
        <begin position="32"/>
        <end position="37"/>
    </location>
</feature>
<feature type="helix" evidence="6">
    <location>
        <begin position="38"/>
        <end position="50"/>
    </location>
</feature>
<feature type="helix" evidence="6">
    <location>
        <begin position="54"/>
        <end position="65"/>
    </location>
</feature>
<feature type="strand" evidence="6">
    <location>
        <begin position="68"/>
        <end position="71"/>
    </location>
</feature>
<feature type="helix" evidence="6">
    <location>
        <begin position="75"/>
        <end position="90"/>
    </location>
</feature>
<feature type="helix" evidence="6">
    <location>
        <begin position="97"/>
        <end position="109"/>
    </location>
</feature>
<feature type="strand" evidence="6">
    <location>
        <begin position="112"/>
        <end position="117"/>
    </location>
</feature>
<feature type="turn" evidence="6">
    <location>
        <begin position="118"/>
        <end position="120"/>
    </location>
</feature>
<feature type="strand" evidence="6">
    <location>
        <begin position="128"/>
        <end position="131"/>
    </location>
</feature>
<name>VAPC2_RICFE</name>
<proteinExistence type="evidence at protein level"/>
<reference key="1">
    <citation type="journal article" date="2005" name="PLoS Biol.">
        <title>The genome sequence of Rickettsia felis identifies the first putative conjugative plasmid in an obligate intracellular parasite.</title>
        <authorList>
            <person name="Ogata H."/>
            <person name="Renesto P."/>
            <person name="Audic S."/>
            <person name="Robert C."/>
            <person name="Blanc G."/>
            <person name="Fournier P.-E."/>
            <person name="Parinello H."/>
            <person name="Claverie J.-M."/>
            <person name="Raoult D."/>
        </authorList>
    </citation>
    <scope>NUCLEOTIDE SEQUENCE [LARGE SCALE GENOMIC DNA]</scope>
    <source>
        <strain>ATCC VR-1525 / URRWXCal2</strain>
    </source>
</reference>
<reference key="2">
    <citation type="journal article" date="2011" name="PLoS ONE">
        <title>Effect of rickettsial toxin VapC on its eukaryotic host.</title>
        <authorList>
            <person name="Audoly G."/>
            <person name="Vincentelli R."/>
            <person name="Edouard S."/>
            <person name="Georgiades K."/>
            <person name="Mediannikov O."/>
            <person name="Gimenez G."/>
            <person name="Socolovschi C."/>
            <person name="Mege J.L."/>
            <person name="Cambillau C."/>
            <person name="Raoult D."/>
        </authorList>
    </citation>
    <scope>FUNCTION</scope>
    <scope>EXPRESSION IN E.COLI; S.CEREVISIAE OR MOUSE</scope>
    <source>
        <strain>ATCC VR-1525 / URRWXCal2</strain>
    </source>
</reference>
<reference key="3">
    <citation type="journal article" date="2012" name="Nucleic Acids Res.">
        <title>Crystal structure of the DNA-bound VapBC2 antitoxin/toxin pair from Rickettsia felis.</title>
        <authorList>
            <person name="Mate M.J."/>
            <person name="Vincentelli R."/>
            <person name="Foos N."/>
            <person name="Raoult D."/>
            <person name="Cambillau C."/>
            <person name="Ortiz-Lombardia M."/>
        </authorList>
    </citation>
    <scope>X-RAY CRYSTALLOGRAPHY (2.50 ANGSTROMS) IN COMPLEX WITH VAPB2 AND DNA</scope>
    <scope>SUBUNIT</scope>
    <scope>MUTAGENESIS OF ASP-6</scope>
</reference>
<protein>
    <recommendedName>
        <fullName evidence="1">Ribonuclease VapC2</fullName>
        <shortName evidence="1">RNase VapC2</shortName>
        <ecNumber evidence="1">3.1.-.-</ecNumber>
    </recommendedName>
    <alternativeName>
        <fullName evidence="1">Toxin VapC2</fullName>
    </alternativeName>
</protein>
<organism>
    <name type="scientific">Rickettsia felis (strain ATCC VR-1525 / URRWXCal2)</name>
    <name type="common">Rickettsia azadi</name>
    <dbReference type="NCBI Taxonomy" id="315456"/>
    <lineage>
        <taxon>Bacteria</taxon>
        <taxon>Pseudomonadati</taxon>
        <taxon>Pseudomonadota</taxon>
        <taxon>Alphaproteobacteria</taxon>
        <taxon>Rickettsiales</taxon>
        <taxon>Rickettsiaceae</taxon>
        <taxon>Rickettsieae</taxon>
        <taxon>Rickettsia</taxon>
        <taxon>spotted fever group</taxon>
    </lineage>
</organism>
<accession>Q4UNB2</accession>
<evidence type="ECO:0000255" key="1">
    <source>
        <dbReference type="HAMAP-Rule" id="MF_00265"/>
    </source>
</evidence>
<evidence type="ECO:0000269" key="2">
    <source>
    </source>
</evidence>
<evidence type="ECO:0000269" key="3">
    <source>
    </source>
</evidence>
<evidence type="ECO:0000305" key="4">
    <source>
    </source>
</evidence>
<evidence type="ECO:0000312" key="5">
    <source>
        <dbReference type="EMBL" id="AAY60946.1"/>
    </source>
</evidence>
<evidence type="ECO:0007829" key="6">
    <source>
        <dbReference type="PDB" id="3ZVK"/>
    </source>
</evidence>
<gene>
    <name evidence="1" type="primary">vapC2</name>
    <name evidence="5" type="ordered locus">RF_0095</name>
</gene>
<keyword id="KW-0002">3D-structure</keyword>
<keyword id="KW-0378">Hydrolase</keyword>
<keyword id="KW-0460">Magnesium</keyword>
<keyword id="KW-0479">Metal-binding</keyword>
<keyword id="KW-0540">Nuclease</keyword>
<keyword id="KW-1277">Toxin-antitoxin system</keyword>
<comment type="function">
    <text evidence="1 2">Toxic component of a type II toxin-antitoxin (TA) system. Has ssRNase activity. Upon expression in E.coli or S.cerevisiae inhibits growth in liquid culture; in S.cerevisiae its expression leads to apoptosis-like characteristics. Rapidly induces apoptosis (within 2 hours) upon microinjection into mouse fibroblasts (L929 line); pretreatment of cells with dexamethasone protects them. Probably contributes to host cell death if bacterial cell lysis occurs during host infection. Its toxic effect is neutralized by coexpression with cognate antitoxin VapB2, its RNase activity is partially inhibited in vitro by VapB2 (PubMed:22046301).</text>
</comment>
<comment type="cofactor">
    <cofactor evidence="1">
        <name>Mg(2+)</name>
        <dbReference type="ChEBI" id="CHEBI:18420"/>
    </cofactor>
</comment>
<comment type="subunit">
    <text evidence="3">Forms complexes with VapB2; probably VapC2(4):VapB2(2) in the absence of DNA, and VapC2(4):VapB2(4) in the presence of DNA. Crystallizes as heterodimers with stoichiometry VapC2(4):VapB2(4) in the presence of its probable promoter DNA. The heterodimers are in contact via alternative VapC-VapC and VapB-VapB interactions. This subunit does not contact DNA.</text>
</comment>
<comment type="similarity">
    <text evidence="1">Belongs to the PINc/VapC protein family.</text>
</comment>
<dbReference type="EC" id="3.1.-.-" evidence="1"/>
<dbReference type="EMBL" id="CP000053">
    <property type="protein sequence ID" value="AAY60946.1"/>
    <property type="molecule type" value="Genomic_DNA"/>
</dbReference>
<dbReference type="PDB" id="3ZVK">
    <property type="method" value="X-ray"/>
    <property type="resolution" value="2.50 A"/>
    <property type="chains" value="A/B/C/D=1-134"/>
</dbReference>
<dbReference type="PDBsum" id="3ZVK"/>
<dbReference type="SMR" id="Q4UNB2"/>
<dbReference type="STRING" id="315456.RF_0095"/>
<dbReference type="KEGG" id="rfe:RF_0095"/>
<dbReference type="eggNOG" id="COG1487">
    <property type="taxonomic scope" value="Bacteria"/>
</dbReference>
<dbReference type="HOGENOM" id="CLU_118482_5_3_5"/>
<dbReference type="OrthoDB" id="9796690at2"/>
<dbReference type="EvolutionaryTrace" id="Q4UNB2"/>
<dbReference type="Proteomes" id="UP000008548">
    <property type="component" value="Chromosome"/>
</dbReference>
<dbReference type="GO" id="GO:0000287">
    <property type="term" value="F:magnesium ion binding"/>
    <property type="evidence" value="ECO:0007669"/>
    <property type="project" value="UniProtKB-UniRule"/>
</dbReference>
<dbReference type="GO" id="GO:0004540">
    <property type="term" value="F:RNA nuclease activity"/>
    <property type="evidence" value="ECO:0007669"/>
    <property type="project" value="InterPro"/>
</dbReference>
<dbReference type="CDD" id="cd18734">
    <property type="entry name" value="PIN_RfVapC2-like"/>
    <property type="match status" value="1"/>
</dbReference>
<dbReference type="Gene3D" id="3.40.50.1010">
    <property type="entry name" value="5'-nuclease"/>
    <property type="match status" value="1"/>
</dbReference>
<dbReference type="HAMAP" id="MF_00265">
    <property type="entry name" value="VapC_Nob1"/>
    <property type="match status" value="1"/>
</dbReference>
<dbReference type="InterPro" id="IPR029060">
    <property type="entry name" value="PIN-like_dom_sf"/>
</dbReference>
<dbReference type="InterPro" id="IPR002716">
    <property type="entry name" value="PIN_dom"/>
</dbReference>
<dbReference type="InterPro" id="IPR050556">
    <property type="entry name" value="Type_II_TA_system_RNase"/>
</dbReference>
<dbReference type="InterPro" id="IPR022907">
    <property type="entry name" value="VapC_family"/>
</dbReference>
<dbReference type="PANTHER" id="PTHR33653">
    <property type="entry name" value="RIBONUCLEASE VAPC2"/>
    <property type="match status" value="1"/>
</dbReference>
<dbReference type="PANTHER" id="PTHR33653:SF1">
    <property type="entry name" value="RIBONUCLEASE VAPC2"/>
    <property type="match status" value="1"/>
</dbReference>
<dbReference type="Pfam" id="PF01850">
    <property type="entry name" value="PIN"/>
    <property type="match status" value="1"/>
</dbReference>
<dbReference type="SMART" id="SM00670">
    <property type="entry name" value="PINc"/>
    <property type="match status" value="1"/>
</dbReference>
<dbReference type="SUPFAM" id="SSF88723">
    <property type="entry name" value="PIN domain-like"/>
    <property type="match status" value="1"/>
</dbReference>